<dbReference type="EMBL" id="CP000546">
    <property type="protein sequence ID" value="ABN00762.1"/>
    <property type="molecule type" value="Genomic_DNA"/>
</dbReference>
<dbReference type="RefSeq" id="WP_004185240.1">
    <property type="nucleotide sequence ID" value="NC_008836.1"/>
</dbReference>
<dbReference type="SMR" id="A2S7I2"/>
<dbReference type="GeneID" id="93061826"/>
<dbReference type="KEGG" id="bml:BMA10229_A1930"/>
<dbReference type="HOGENOM" id="CLU_058591_0_2_4"/>
<dbReference type="Proteomes" id="UP000002283">
    <property type="component" value="Chromosome I"/>
</dbReference>
<dbReference type="GO" id="GO:0022627">
    <property type="term" value="C:cytosolic small ribosomal subunit"/>
    <property type="evidence" value="ECO:0007669"/>
    <property type="project" value="TreeGrafter"/>
</dbReference>
<dbReference type="GO" id="GO:0003729">
    <property type="term" value="F:mRNA binding"/>
    <property type="evidence" value="ECO:0007669"/>
    <property type="project" value="UniProtKB-UniRule"/>
</dbReference>
<dbReference type="GO" id="GO:0019843">
    <property type="term" value="F:rRNA binding"/>
    <property type="evidence" value="ECO:0007669"/>
    <property type="project" value="UniProtKB-UniRule"/>
</dbReference>
<dbReference type="GO" id="GO:0003735">
    <property type="term" value="F:structural constituent of ribosome"/>
    <property type="evidence" value="ECO:0007669"/>
    <property type="project" value="InterPro"/>
</dbReference>
<dbReference type="GO" id="GO:0006412">
    <property type="term" value="P:translation"/>
    <property type="evidence" value="ECO:0007669"/>
    <property type="project" value="UniProtKB-UniRule"/>
</dbReference>
<dbReference type="CDD" id="cd02412">
    <property type="entry name" value="KH-II_30S_S3"/>
    <property type="match status" value="1"/>
</dbReference>
<dbReference type="FunFam" id="3.30.1140.32:FF:000006">
    <property type="entry name" value="30S ribosomal protein S3"/>
    <property type="match status" value="1"/>
</dbReference>
<dbReference type="FunFam" id="3.30.300.20:FF:000001">
    <property type="entry name" value="30S ribosomal protein S3"/>
    <property type="match status" value="1"/>
</dbReference>
<dbReference type="Gene3D" id="3.30.300.20">
    <property type="match status" value="1"/>
</dbReference>
<dbReference type="Gene3D" id="3.30.1140.32">
    <property type="entry name" value="Ribosomal protein S3, C-terminal domain"/>
    <property type="match status" value="1"/>
</dbReference>
<dbReference type="HAMAP" id="MF_01309_B">
    <property type="entry name" value="Ribosomal_uS3_B"/>
    <property type="match status" value="1"/>
</dbReference>
<dbReference type="InterPro" id="IPR004087">
    <property type="entry name" value="KH_dom"/>
</dbReference>
<dbReference type="InterPro" id="IPR015946">
    <property type="entry name" value="KH_dom-like_a/b"/>
</dbReference>
<dbReference type="InterPro" id="IPR004044">
    <property type="entry name" value="KH_dom_type_2"/>
</dbReference>
<dbReference type="InterPro" id="IPR009019">
    <property type="entry name" value="KH_sf_prok-type"/>
</dbReference>
<dbReference type="InterPro" id="IPR036419">
    <property type="entry name" value="Ribosomal_S3_C_sf"/>
</dbReference>
<dbReference type="InterPro" id="IPR005704">
    <property type="entry name" value="Ribosomal_uS3_bac-typ"/>
</dbReference>
<dbReference type="InterPro" id="IPR001351">
    <property type="entry name" value="Ribosomal_uS3_C"/>
</dbReference>
<dbReference type="InterPro" id="IPR018280">
    <property type="entry name" value="Ribosomal_uS3_CS"/>
</dbReference>
<dbReference type="NCBIfam" id="TIGR01009">
    <property type="entry name" value="rpsC_bact"/>
    <property type="match status" value="1"/>
</dbReference>
<dbReference type="PANTHER" id="PTHR11760">
    <property type="entry name" value="30S/40S RIBOSOMAL PROTEIN S3"/>
    <property type="match status" value="1"/>
</dbReference>
<dbReference type="PANTHER" id="PTHR11760:SF19">
    <property type="entry name" value="SMALL RIBOSOMAL SUBUNIT PROTEIN US3C"/>
    <property type="match status" value="1"/>
</dbReference>
<dbReference type="Pfam" id="PF07650">
    <property type="entry name" value="KH_2"/>
    <property type="match status" value="1"/>
</dbReference>
<dbReference type="Pfam" id="PF00189">
    <property type="entry name" value="Ribosomal_S3_C"/>
    <property type="match status" value="1"/>
</dbReference>
<dbReference type="SMART" id="SM00322">
    <property type="entry name" value="KH"/>
    <property type="match status" value="1"/>
</dbReference>
<dbReference type="SUPFAM" id="SSF54814">
    <property type="entry name" value="Prokaryotic type KH domain (KH-domain type II)"/>
    <property type="match status" value="1"/>
</dbReference>
<dbReference type="SUPFAM" id="SSF54821">
    <property type="entry name" value="Ribosomal protein S3 C-terminal domain"/>
    <property type="match status" value="1"/>
</dbReference>
<dbReference type="PROSITE" id="PS50823">
    <property type="entry name" value="KH_TYPE_2"/>
    <property type="match status" value="1"/>
</dbReference>
<dbReference type="PROSITE" id="PS00548">
    <property type="entry name" value="RIBOSOMAL_S3"/>
    <property type="match status" value="1"/>
</dbReference>
<accession>A2S7I2</accession>
<organism>
    <name type="scientific">Burkholderia mallei (strain NCTC 10229)</name>
    <dbReference type="NCBI Taxonomy" id="412022"/>
    <lineage>
        <taxon>Bacteria</taxon>
        <taxon>Pseudomonadati</taxon>
        <taxon>Pseudomonadota</taxon>
        <taxon>Betaproteobacteria</taxon>
        <taxon>Burkholderiales</taxon>
        <taxon>Burkholderiaceae</taxon>
        <taxon>Burkholderia</taxon>
        <taxon>pseudomallei group</taxon>
    </lineage>
</organism>
<keyword id="KW-0687">Ribonucleoprotein</keyword>
<keyword id="KW-0689">Ribosomal protein</keyword>
<keyword id="KW-0694">RNA-binding</keyword>
<keyword id="KW-0699">rRNA-binding</keyword>
<feature type="chain" id="PRO_1000086097" description="Small ribosomal subunit protein uS3">
    <location>
        <begin position="1"/>
        <end position="266"/>
    </location>
</feature>
<feature type="domain" description="KH type-2" evidence="1">
    <location>
        <begin position="39"/>
        <end position="107"/>
    </location>
</feature>
<feature type="region of interest" description="Disordered" evidence="2">
    <location>
        <begin position="214"/>
        <end position="266"/>
    </location>
</feature>
<feature type="compositionally biased region" description="Basic and acidic residues" evidence="2">
    <location>
        <begin position="230"/>
        <end position="241"/>
    </location>
</feature>
<feature type="compositionally biased region" description="Basic and acidic residues" evidence="2">
    <location>
        <begin position="257"/>
        <end position="266"/>
    </location>
</feature>
<evidence type="ECO:0000255" key="1">
    <source>
        <dbReference type="HAMAP-Rule" id="MF_01309"/>
    </source>
</evidence>
<evidence type="ECO:0000256" key="2">
    <source>
        <dbReference type="SAM" id="MobiDB-lite"/>
    </source>
</evidence>
<evidence type="ECO:0000305" key="3"/>
<protein>
    <recommendedName>
        <fullName evidence="1">Small ribosomal subunit protein uS3</fullName>
    </recommendedName>
    <alternativeName>
        <fullName evidence="3">30S ribosomal protein S3</fullName>
    </alternativeName>
</protein>
<name>RS3_BURM9</name>
<reference key="1">
    <citation type="journal article" date="2010" name="Genome Biol. Evol.">
        <title>Continuing evolution of Burkholderia mallei through genome reduction and large-scale rearrangements.</title>
        <authorList>
            <person name="Losada L."/>
            <person name="Ronning C.M."/>
            <person name="DeShazer D."/>
            <person name="Woods D."/>
            <person name="Fedorova N."/>
            <person name="Kim H.S."/>
            <person name="Shabalina S.A."/>
            <person name="Pearson T.R."/>
            <person name="Brinkac L."/>
            <person name="Tan P."/>
            <person name="Nandi T."/>
            <person name="Crabtree J."/>
            <person name="Badger J."/>
            <person name="Beckstrom-Sternberg S."/>
            <person name="Saqib M."/>
            <person name="Schutzer S.E."/>
            <person name="Keim P."/>
            <person name="Nierman W.C."/>
        </authorList>
    </citation>
    <scope>NUCLEOTIDE SEQUENCE [LARGE SCALE GENOMIC DNA]</scope>
    <source>
        <strain>NCTC 10229</strain>
    </source>
</reference>
<proteinExistence type="inferred from homology"/>
<gene>
    <name evidence="1" type="primary">rpsC</name>
    <name type="ordered locus">BMA10229_A1930</name>
</gene>
<sequence length="266" mass="29919">MGQKIHPTGFRLAVSRNWASRWYANNNNFAAMLQEDIGVREYLKKKLKNASVGRVVIERPAKNARITIFSSRPGVVIGKKGEDIELLKTELQRRMGVPVHVNIEEIRKPETDAQLIADSITQQLERRIMFRRAMKRAMQNAMRLGAQGIKIMSAGRLNGIEIARTEWYREGRVPLHTLRADIDYATSEAKTTYGIIGVKVWVYKGDTLGRNDAPVVEEVTEDKRPRRNARPGDRRPRRDGEGGAPGARRGGPRRGAGKPEDGKTGE</sequence>
<comment type="function">
    <text evidence="1">Binds the lower part of the 30S subunit head. Binds mRNA in the 70S ribosome, positioning it for translation.</text>
</comment>
<comment type="subunit">
    <text evidence="1">Part of the 30S ribosomal subunit. Forms a tight complex with proteins S10 and S14.</text>
</comment>
<comment type="similarity">
    <text evidence="1">Belongs to the universal ribosomal protein uS3 family.</text>
</comment>